<feature type="chain" id="PRO_1000090566" description="Crossover junction endodeoxyribonuclease RuvC">
    <location>
        <begin position="1"/>
        <end position="173"/>
    </location>
</feature>
<feature type="active site" evidence="1">
    <location>
        <position position="8"/>
    </location>
</feature>
<feature type="active site" evidence="1">
    <location>
        <position position="69"/>
    </location>
</feature>
<feature type="active site" evidence="1">
    <location>
        <position position="141"/>
    </location>
</feature>
<feature type="binding site" evidence="1">
    <location>
        <position position="8"/>
    </location>
    <ligand>
        <name>Mg(2+)</name>
        <dbReference type="ChEBI" id="CHEBI:18420"/>
        <label>1</label>
    </ligand>
</feature>
<feature type="binding site" evidence="1">
    <location>
        <position position="69"/>
    </location>
    <ligand>
        <name>Mg(2+)</name>
        <dbReference type="ChEBI" id="CHEBI:18420"/>
        <label>2</label>
    </ligand>
</feature>
<feature type="binding site" evidence="1">
    <location>
        <position position="141"/>
    </location>
    <ligand>
        <name>Mg(2+)</name>
        <dbReference type="ChEBI" id="CHEBI:18420"/>
        <label>1</label>
    </ligand>
</feature>
<gene>
    <name evidence="1" type="primary">ruvC</name>
    <name type="ordered locus">Smal_3127</name>
</gene>
<keyword id="KW-0963">Cytoplasm</keyword>
<keyword id="KW-0227">DNA damage</keyword>
<keyword id="KW-0233">DNA recombination</keyword>
<keyword id="KW-0234">DNA repair</keyword>
<keyword id="KW-0238">DNA-binding</keyword>
<keyword id="KW-0255">Endonuclease</keyword>
<keyword id="KW-0378">Hydrolase</keyword>
<keyword id="KW-0460">Magnesium</keyword>
<keyword id="KW-0479">Metal-binding</keyword>
<keyword id="KW-0540">Nuclease</keyword>
<evidence type="ECO:0000255" key="1">
    <source>
        <dbReference type="HAMAP-Rule" id="MF_00034"/>
    </source>
</evidence>
<organism>
    <name type="scientific">Stenotrophomonas maltophilia (strain R551-3)</name>
    <dbReference type="NCBI Taxonomy" id="391008"/>
    <lineage>
        <taxon>Bacteria</taxon>
        <taxon>Pseudomonadati</taxon>
        <taxon>Pseudomonadota</taxon>
        <taxon>Gammaproteobacteria</taxon>
        <taxon>Lysobacterales</taxon>
        <taxon>Lysobacteraceae</taxon>
        <taxon>Stenotrophomonas</taxon>
        <taxon>Stenotrophomonas maltophilia group</taxon>
    </lineage>
</organism>
<comment type="function">
    <text evidence="1">The RuvA-RuvB-RuvC complex processes Holliday junction (HJ) DNA during genetic recombination and DNA repair. Endonuclease that resolves HJ intermediates. Cleaves cruciform DNA by making single-stranded nicks across the HJ at symmetrical positions within the homologous arms, yielding a 5'-phosphate and a 3'-hydroxyl group; requires a central core of homology in the junction. The consensus cleavage sequence is 5'-(A/T)TT(C/G)-3'. Cleavage occurs on the 3'-side of the TT dinucleotide at the point of strand exchange. HJ branch migration catalyzed by RuvA-RuvB allows RuvC to scan DNA until it finds its consensus sequence, where it cleaves and resolves the cruciform DNA.</text>
</comment>
<comment type="catalytic activity">
    <reaction evidence="1">
        <text>Endonucleolytic cleavage at a junction such as a reciprocal single-stranded crossover between two homologous DNA duplexes (Holliday junction).</text>
        <dbReference type="EC" id="3.1.21.10"/>
    </reaction>
</comment>
<comment type="cofactor">
    <cofactor evidence="1">
        <name>Mg(2+)</name>
        <dbReference type="ChEBI" id="CHEBI:18420"/>
    </cofactor>
    <text evidence="1">Binds 2 Mg(2+) ion per subunit.</text>
</comment>
<comment type="subunit">
    <text evidence="1">Homodimer which binds Holliday junction (HJ) DNA. The HJ becomes 2-fold symmetrical on binding to RuvC with unstacked arms; it has a different conformation from HJ DNA in complex with RuvA. In the full resolvosome a probable DNA-RuvA(4)-RuvB(12)-RuvC(2) complex forms which resolves the HJ.</text>
</comment>
<comment type="subcellular location">
    <subcellularLocation>
        <location evidence="1">Cytoplasm</location>
    </subcellularLocation>
</comment>
<comment type="similarity">
    <text evidence="1">Belongs to the RuvC family.</text>
</comment>
<accession>B4ST35</accession>
<proteinExistence type="inferred from homology"/>
<name>RUVC_STRM5</name>
<sequence>MTRILGIDPGSQRTGVGIIDVDATGRVSHVHHQPLVLLGADDFPQRMKLLVLGLADLCREYEPQEVAIERVFMARNPDSALKLGQARGAAISAVVLRDLPVHEYAASEIKLAVVGRGGAEKQQVQHMVGLMLNLKTKLQADAADALAVAITHAHVRATANRLGLSARQAWGRK</sequence>
<protein>
    <recommendedName>
        <fullName evidence="1">Crossover junction endodeoxyribonuclease RuvC</fullName>
        <ecNumber evidence="1">3.1.21.10</ecNumber>
    </recommendedName>
    <alternativeName>
        <fullName evidence="1">Holliday junction nuclease RuvC</fullName>
    </alternativeName>
    <alternativeName>
        <fullName evidence="1">Holliday junction resolvase RuvC</fullName>
    </alternativeName>
</protein>
<dbReference type="EC" id="3.1.21.10" evidence="1"/>
<dbReference type="EMBL" id="CP001111">
    <property type="protein sequence ID" value="ACF52826.1"/>
    <property type="molecule type" value="Genomic_DNA"/>
</dbReference>
<dbReference type="RefSeq" id="WP_006386268.1">
    <property type="nucleotide sequence ID" value="NC_011071.1"/>
</dbReference>
<dbReference type="SMR" id="B4ST35"/>
<dbReference type="STRING" id="391008.Smal_3127"/>
<dbReference type="KEGG" id="smt:Smal_3127"/>
<dbReference type="eggNOG" id="COG0817">
    <property type="taxonomic scope" value="Bacteria"/>
</dbReference>
<dbReference type="HOGENOM" id="CLU_091257_2_1_6"/>
<dbReference type="OrthoDB" id="9805499at2"/>
<dbReference type="Proteomes" id="UP000001867">
    <property type="component" value="Chromosome"/>
</dbReference>
<dbReference type="GO" id="GO:0005737">
    <property type="term" value="C:cytoplasm"/>
    <property type="evidence" value="ECO:0007669"/>
    <property type="project" value="UniProtKB-SubCell"/>
</dbReference>
<dbReference type="GO" id="GO:0048476">
    <property type="term" value="C:Holliday junction resolvase complex"/>
    <property type="evidence" value="ECO:0007669"/>
    <property type="project" value="UniProtKB-UniRule"/>
</dbReference>
<dbReference type="GO" id="GO:0008821">
    <property type="term" value="F:crossover junction DNA endonuclease activity"/>
    <property type="evidence" value="ECO:0007669"/>
    <property type="project" value="UniProtKB-UniRule"/>
</dbReference>
<dbReference type="GO" id="GO:0003677">
    <property type="term" value="F:DNA binding"/>
    <property type="evidence" value="ECO:0007669"/>
    <property type="project" value="UniProtKB-KW"/>
</dbReference>
<dbReference type="GO" id="GO:0000287">
    <property type="term" value="F:magnesium ion binding"/>
    <property type="evidence" value="ECO:0007669"/>
    <property type="project" value="UniProtKB-UniRule"/>
</dbReference>
<dbReference type="GO" id="GO:0006310">
    <property type="term" value="P:DNA recombination"/>
    <property type="evidence" value="ECO:0007669"/>
    <property type="project" value="UniProtKB-UniRule"/>
</dbReference>
<dbReference type="GO" id="GO:0006281">
    <property type="term" value="P:DNA repair"/>
    <property type="evidence" value="ECO:0007669"/>
    <property type="project" value="UniProtKB-UniRule"/>
</dbReference>
<dbReference type="CDD" id="cd16962">
    <property type="entry name" value="RuvC"/>
    <property type="match status" value="1"/>
</dbReference>
<dbReference type="FunFam" id="3.30.420.10:FF:000002">
    <property type="entry name" value="Crossover junction endodeoxyribonuclease RuvC"/>
    <property type="match status" value="1"/>
</dbReference>
<dbReference type="Gene3D" id="3.30.420.10">
    <property type="entry name" value="Ribonuclease H-like superfamily/Ribonuclease H"/>
    <property type="match status" value="1"/>
</dbReference>
<dbReference type="HAMAP" id="MF_00034">
    <property type="entry name" value="RuvC"/>
    <property type="match status" value="1"/>
</dbReference>
<dbReference type="InterPro" id="IPR012337">
    <property type="entry name" value="RNaseH-like_sf"/>
</dbReference>
<dbReference type="InterPro" id="IPR036397">
    <property type="entry name" value="RNaseH_sf"/>
</dbReference>
<dbReference type="InterPro" id="IPR020563">
    <property type="entry name" value="X-over_junc_endoDNase_Mg_BS"/>
</dbReference>
<dbReference type="InterPro" id="IPR002176">
    <property type="entry name" value="X-over_junc_endoDNase_RuvC"/>
</dbReference>
<dbReference type="NCBIfam" id="TIGR00228">
    <property type="entry name" value="ruvC"/>
    <property type="match status" value="1"/>
</dbReference>
<dbReference type="PANTHER" id="PTHR30194">
    <property type="entry name" value="CROSSOVER JUNCTION ENDODEOXYRIBONUCLEASE RUVC"/>
    <property type="match status" value="1"/>
</dbReference>
<dbReference type="PANTHER" id="PTHR30194:SF3">
    <property type="entry name" value="CROSSOVER JUNCTION ENDODEOXYRIBONUCLEASE RUVC"/>
    <property type="match status" value="1"/>
</dbReference>
<dbReference type="Pfam" id="PF02075">
    <property type="entry name" value="RuvC"/>
    <property type="match status" value="1"/>
</dbReference>
<dbReference type="PRINTS" id="PR00696">
    <property type="entry name" value="RSOLVASERUVC"/>
</dbReference>
<dbReference type="SUPFAM" id="SSF53098">
    <property type="entry name" value="Ribonuclease H-like"/>
    <property type="match status" value="1"/>
</dbReference>
<dbReference type="PROSITE" id="PS01321">
    <property type="entry name" value="RUVC"/>
    <property type="match status" value="1"/>
</dbReference>
<reference key="1">
    <citation type="submission" date="2008-06" db="EMBL/GenBank/DDBJ databases">
        <title>Complete sequence of Stenotrophomonas maltophilia R551-3.</title>
        <authorList>
            <consortium name="US DOE Joint Genome Institute"/>
            <person name="Lucas S."/>
            <person name="Copeland A."/>
            <person name="Lapidus A."/>
            <person name="Glavina del Rio T."/>
            <person name="Dalin E."/>
            <person name="Tice H."/>
            <person name="Pitluck S."/>
            <person name="Chain P."/>
            <person name="Malfatti S."/>
            <person name="Shin M."/>
            <person name="Vergez L."/>
            <person name="Lang D."/>
            <person name="Schmutz J."/>
            <person name="Larimer F."/>
            <person name="Land M."/>
            <person name="Hauser L."/>
            <person name="Kyrpides N."/>
            <person name="Mikhailova N."/>
            <person name="Taghavi S."/>
            <person name="Monchy S."/>
            <person name="Newman L."/>
            <person name="Vangronsveld J."/>
            <person name="van der Lelie D."/>
            <person name="Richardson P."/>
        </authorList>
    </citation>
    <scope>NUCLEOTIDE SEQUENCE [LARGE SCALE GENOMIC DNA]</scope>
    <source>
        <strain>R551-3</strain>
    </source>
</reference>